<accession>Q8K987</accession>
<organism>
    <name type="scientific">Buchnera aphidicola subsp. Schizaphis graminum (strain Sg)</name>
    <dbReference type="NCBI Taxonomy" id="198804"/>
    <lineage>
        <taxon>Bacteria</taxon>
        <taxon>Pseudomonadati</taxon>
        <taxon>Pseudomonadota</taxon>
        <taxon>Gammaproteobacteria</taxon>
        <taxon>Enterobacterales</taxon>
        <taxon>Erwiniaceae</taxon>
        <taxon>Buchnera</taxon>
    </lineage>
</organism>
<feature type="chain" id="PRO_0000193421" description="Periplasmic chaperone PpiD">
    <location>
        <begin position="1"/>
        <end position="621"/>
    </location>
</feature>
<feature type="topological domain" description="Cytoplasmic" evidence="1">
    <location>
        <begin position="1"/>
        <end position="10"/>
    </location>
</feature>
<feature type="transmembrane region" description="Helical" evidence="2">
    <location>
        <begin position="11"/>
        <end position="31"/>
    </location>
</feature>
<feature type="topological domain" description="Periplasmic" evidence="1">
    <location>
        <begin position="32"/>
        <end position="621"/>
    </location>
</feature>
<feature type="domain" description="PpiC" evidence="3">
    <location>
        <begin position="228"/>
        <end position="355"/>
    </location>
</feature>
<keyword id="KW-0997">Cell inner membrane</keyword>
<keyword id="KW-1003">Cell membrane</keyword>
<keyword id="KW-0143">Chaperone</keyword>
<keyword id="KW-0472">Membrane</keyword>
<keyword id="KW-0812">Transmembrane</keyword>
<keyword id="KW-1133">Transmembrane helix</keyword>
<proteinExistence type="inferred from homology"/>
<gene>
    <name type="primary">ppiD</name>
    <name type="ordered locus">BUsg_462</name>
</gene>
<protein>
    <recommendedName>
        <fullName evidence="1">Periplasmic chaperone PpiD</fullName>
    </recommendedName>
    <alternativeName>
        <fullName evidence="1">Periplasmic folding chaperone</fullName>
    </alternativeName>
</protein>
<sequence>MIKYLKSRLNIIIVKCILGIIILSLVFGTINNYFNRDTTRYIAKVNGEEISFITLQKMYIDERKKQEKILGQDFEKIKKNKKFKEETYNYILSQLINNILLEQYTKRMNFNIQDNEIKKIIFNIPIFQENNEFNKKKYLNYLSSKNLTHYEYVSLIRKKLNTTYLINAISETDFILDNEQKKIIKLLSEKRIIKKAIIKINPIINNQKVTEKEINNYFDQHKNEFYTPEKFKISYIQLKPNKFKIQCSNEEIKNWYKKNIDKYSNQERRQYSIIQTKTKNEALSILSELKKGEDFSKIAKEKSIDPFSSEQGGNIGWITKNFVPNEIKIANLEKIDQISNIIKFNNNFLIIKLNKILPKKYKKISEVSDLIENEIKYQKSLNTYKKLKDKIAIIAKKNINRFDLILKKTNILPKETNWFDKDSVPKELQNPILKKIIFKKGLLDRQKKLKSHSGLIVLNDHQSFLLSIKNFQKKRIKKLKDIKRNIVNKLKYIKAVEKTKNKLKKILFQLKIGNEHILKKENIIFEEYETVSRYDKNPNISVIFAMPHPKEEKNVYTMYQNKNKNFVIALLDKVYNEKFSNEEEKIIIKYLEKNNIDVTFQCFLQNLHRKATILYNKTDNF</sequence>
<reference key="1">
    <citation type="journal article" date="2002" name="Science">
        <title>50 million years of genomic stasis in endosymbiotic bacteria.</title>
        <authorList>
            <person name="Tamas I."/>
            <person name="Klasson L."/>
            <person name="Canbaeck B."/>
            <person name="Naeslund A.K."/>
            <person name="Eriksson A.-S."/>
            <person name="Wernegreen J.J."/>
            <person name="Sandstroem J.P."/>
            <person name="Moran N.A."/>
            <person name="Andersson S.G.E."/>
        </authorList>
    </citation>
    <scope>NUCLEOTIDE SEQUENCE [LARGE SCALE GENOMIC DNA]</scope>
    <source>
        <strain>Sg</strain>
    </source>
</reference>
<evidence type="ECO:0000250" key="1">
    <source>
        <dbReference type="UniProtKB" id="P0ADY1"/>
    </source>
</evidence>
<evidence type="ECO:0000255" key="2"/>
<evidence type="ECO:0000255" key="3">
    <source>
        <dbReference type="PROSITE-ProRule" id="PRU00278"/>
    </source>
</evidence>
<evidence type="ECO:0000305" key="4"/>
<comment type="function">
    <text evidence="1">Chaperone that functions as a gatekeeper on the periplasmic side of the SecYEG translocon. Facilitates the translocation of precursor proteins across SecYEG by interacting with the translocating substrate. Also plays a role in the release of newly synthesized secreted proteins at the periplasmic exit site of the Sec translocon.</text>
</comment>
<comment type="subunit">
    <text evidence="1">Interacts with the SecYEG translocon (By similarity). Binds to the lateral gate of SecY (By similarity). Forms a complex with YfgM (By similarity).</text>
</comment>
<comment type="subcellular location">
    <subcellularLocation>
        <location evidence="1">Cell inner membrane</location>
        <topology evidence="1">Single-pass type II membrane protein</topology>
        <orientation evidence="1">Periplasmic side</orientation>
    </subcellularLocation>
    <text evidence="1">Located at the lateral gate of SecY.</text>
</comment>
<comment type="similarity">
    <text evidence="4">Belongs to the PpiD chaperone family.</text>
</comment>
<name>PPID_BUCAP</name>
<dbReference type="EMBL" id="AE013218">
    <property type="protein sequence ID" value="AAM68005.1"/>
    <property type="molecule type" value="Genomic_DNA"/>
</dbReference>
<dbReference type="RefSeq" id="WP_011053972.1">
    <property type="nucleotide sequence ID" value="NC_004061.1"/>
</dbReference>
<dbReference type="SMR" id="Q8K987"/>
<dbReference type="STRING" id="198804.BUsg_462"/>
<dbReference type="GeneID" id="93003933"/>
<dbReference type="KEGG" id="bas:BUsg_462"/>
<dbReference type="eggNOG" id="COG0760">
    <property type="taxonomic scope" value="Bacteria"/>
</dbReference>
<dbReference type="HOGENOM" id="CLU_023843_1_1_6"/>
<dbReference type="Proteomes" id="UP000000416">
    <property type="component" value="Chromosome"/>
</dbReference>
<dbReference type="GO" id="GO:0005886">
    <property type="term" value="C:plasma membrane"/>
    <property type="evidence" value="ECO:0007669"/>
    <property type="project" value="UniProtKB-SubCell"/>
</dbReference>
<dbReference type="GO" id="GO:0003755">
    <property type="term" value="F:peptidyl-prolyl cis-trans isomerase activity"/>
    <property type="evidence" value="ECO:0007669"/>
    <property type="project" value="InterPro"/>
</dbReference>
<dbReference type="Gene3D" id="3.10.50.40">
    <property type="match status" value="1"/>
</dbReference>
<dbReference type="Gene3D" id="1.10.4030.10">
    <property type="entry name" value="Porin chaperone SurA, peptide-binding domain"/>
    <property type="match status" value="1"/>
</dbReference>
<dbReference type="InterPro" id="IPR046357">
    <property type="entry name" value="PPIase_dom_sf"/>
</dbReference>
<dbReference type="InterPro" id="IPR000297">
    <property type="entry name" value="PPIase_PpiC"/>
</dbReference>
<dbReference type="InterPro" id="IPR052029">
    <property type="entry name" value="PpiD_chaperone"/>
</dbReference>
<dbReference type="InterPro" id="IPR027304">
    <property type="entry name" value="Trigger_fact/SurA_dom_sf"/>
</dbReference>
<dbReference type="NCBIfam" id="NF008054">
    <property type="entry name" value="PRK10788.1"/>
    <property type="match status" value="1"/>
</dbReference>
<dbReference type="PANTHER" id="PTHR47529">
    <property type="entry name" value="PEPTIDYL-PROLYL CIS-TRANS ISOMERASE D"/>
    <property type="match status" value="1"/>
</dbReference>
<dbReference type="PANTHER" id="PTHR47529:SF1">
    <property type="entry name" value="PERIPLASMIC CHAPERONE PPID"/>
    <property type="match status" value="1"/>
</dbReference>
<dbReference type="Pfam" id="PF13145">
    <property type="entry name" value="Rotamase_2"/>
    <property type="match status" value="1"/>
</dbReference>
<dbReference type="Pfam" id="PF13624">
    <property type="entry name" value="SurA_N_3"/>
    <property type="match status" value="1"/>
</dbReference>
<dbReference type="SUPFAM" id="SSF54534">
    <property type="entry name" value="FKBP-like"/>
    <property type="match status" value="1"/>
</dbReference>
<dbReference type="SUPFAM" id="SSF109998">
    <property type="entry name" value="Triger factor/SurA peptide-binding domain-like"/>
    <property type="match status" value="1"/>
</dbReference>
<dbReference type="PROSITE" id="PS50198">
    <property type="entry name" value="PPIC_PPIASE_2"/>
    <property type="match status" value="1"/>
</dbReference>